<dbReference type="EMBL" id="CP000746">
    <property type="protein sequence ID" value="ABR75451.1"/>
    <property type="molecule type" value="Genomic_DNA"/>
</dbReference>
<dbReference type="RefSeq" id="WP_012073827.1">
    <property type="nucleotide sequence ID" value="NC_009655.1"/>
</dbReference>
<dbReference type="SMR" id="A6VR54"/>
<dbReference type="STRING" id="339671.Asuc_2107"/>
<dbReference type="KEGG" id="asu:Asuc_2107"/>
<dbReference type="eggNOG" id="COG0231">
    <property type="taxonomic scope" value="Bacteria"/>
</dbReference>
<dbReference type="HOGENOM" id="CLU_074944_0_0_6"/>
<dbReference type="OrthoDB" id="9801844at2"/>
<dbReference type="UniPathway" id="UPA00345"/>
<dbReference type="Proteomes" id="UP000001114">
    <property type="component" value="Chromosome"/>
</dbReference>
<dbReference type="GO" id="GO:0005737">
    <property type="term" value="C:cytoplasm"/>
    <property type="evidence" value="ECO:0007669"/>
    <property type="project" value="UniProtKB-SubCell"/>
</dbReference>
<dbReference type="GO" id="GO:0003746">
    <property type="term" value="F:translation elongation factor activity"/>
    <property type="evidence" value="ECO:0007669"/>
    <property type="project" value="UniProtKB-UniRule"/>
</dbReference>
<dbReference type="GO" id="GO:0043043">
    <property type="term" value="P:peptide biosynthetic process"/>
    <property type="evidence" value="ECO:0007669"/>
    <property type="project" value="InterPro"/>
</dbReference>
<dbReference type="CDD" id="cd04470">
    <property type="entry name" value="S1_EF-P_repeat_1"/>
    <property type="match status" value="1"/>
</dbReference>
<dbReference type="CDD" id="cd05794">
    <property type="entry name" value="S1_EF-P_repeat_2"/>
    <property type="match status" value="1"/>
</dbReference>
<dbReference type="FunFam" id="2.30.30.30:FF:000003">
    <property type="entry name" value="Elongation factor P"/>
    <property type="match status" value="1"/>
</dbReference>
<dbReference type="FunFam" id="2.40.50.140:FF:000004">
    <property type="entry name" value="Elongation factor P"/>
    <property type="match status" value="1"/>
</dbReference>
<dbReference type="FunFam" id="2.40.50.140:FF:000009">
    <property type="entry name" value="Elongation factor P"/>
    <property type="match status" value="1"/>
</dbReference>
<dbReference type="Gene3D" id="2.30.30.30">
    <property type="match status" value="1"/>
</dbReference>
<dbReference type="Gene3D" id="2.40.50.140">
    <property type="entry name" value="Nucleic acid-binding proteins"/>
    <property type="match status" value="2"/>
</dbReference>
<dbReference type="HAMAP" id="MF_00141">
    <property type="entry name" value="EF_P"/>
    <property type="match status" value="1"/>
</dbReference>
<dbReference type="InterPro" id="IPR015365">
    <property type="entry name" value="Elong-fact-P_C"/>
</dbReference>
<dbReference type="InterPro" id="IPR012340">
    <property type="entry name" value="NA-bd_OB-fold"/>
</dbReference>
<dbReference type="InterPro" id="IPR014722">
    <property type="entry name" value="Rib_uL2_dom2"/>
</dbReference>
<dbReference type="InterPro" id="IPR020599">
    <property type="entry name" value="Transl_elong_fac_P/YeiP"/>
</dbReference>
<dbReference type="InterPro" id="IPR013185">
    <property type="entry name" value="Transl_elong_KOW-like"/>
</dbReference>
<dbReference type="InterPro" id="IPR001059">
    <property type="entry name" value="Transl_elong_P/YeiP_cen"/>
</dbReference>
<dbReference type="InterPro" id="IPR013852">
    <property type="entry name" value="Transl_elong_P/YeiP_CS"/>
</dbReference>
<dbReference type="InterPro" id="IPR011768">
    <property type="entry name" value="Transl_elongation_fac_P"/>
</dbReference>
<dbReference type="InterPro" id="IPR008991">
    <property type="entry name" value="Translation_prot_SH3-like_sf"/>
</dbReference>
<dbReference type="NCBIfam" id="TIGR00038">
    <property type="entry name" value="efp"/>
    <property type="match status" value="1"/>
</dbReference>
<dbReference type="NCBIfam" id="NF001810">
    <property type="entry name" value="PRK00529.1"/>
    <property type="match status" value="1"/>
</dbReference>
<dbReference type="PANTHER" id="PTHR30053">
    <property type="entry name" value="ELONGATION FACTOR P"/>
    <property type="match status" value="1"/>
</dbReference>
<dbReference type="PANTHER" id="PTHR30053:SF12">
    <property type="entry name" value="ELONGATION FACTOR P (EF-P) FAMILY PROTEIN"/>
    <property type="match status" value="1"/>
</dbReference>
<dbReference type="Pfam" id="PF01132">
    <property type="entry name" value="EFP"/>
    <property type="match status" value="1"/>
</dbReference>
<dbReference type="Pfam" id="PF08207">
    <property type="entry name" value="EFP_N"/>
    <property type="match status" value="1"/>
</dbReference>
<dbReference type="Pfam" id="PF09285">
    <property type="entry name" value="Elong-fact-P_C"/>
    <property type="match status" value="1"/>
</dbReference>
<dbReference type="PIRSF" id="PIRSF005901">
    <property type="entry name" value="EF-P"/>
    <property type="match status" value="1"/>
</dbReference>
<dbReference type="SMART" id="SM01185">
    <property type="entry name" value="EFP"/>
    <property type="match status" value="1"/>
</dbReference>
<dbReference type="SMART" id="SM00841">
    <property type="entry name" value="Elong-fact-P_C"/>
    <property type="match status" value="1"/>
</dbReference>
<dbReference type="SUPFAM" id="SSF50249">
    <property type="entry name" value="Nucleic acid-binding proteins"/>
    <property type="match status" value="2"/>
</dbReference>
<dbReference type="SUPFAM" id="SSF50104">
    <property type="entry name" value="Translation proteins SH3-like domain"/>
    <property type="match status" value="1"/>
</dbReference>
<dbReference type="PROSITE" id="PS01275">
    <property type="entry name" value="EFP"/>
    <property type="match status" value="1"/>
</dbReference>
<reference key="1">
    <citation type="journal article" date="2010" name="BMC Genomics">
        <title>A genomic perspective on the potential of Actinobacillus succinogenes for industrial succinate production.</title>
        <authorList>
            <person name="McKinlay J.B."/>
            <person name="Laivenieks M."/>
            <person name="Schindler B.D."/>
            <person name="McKinlay A.A."/>
            <person name="Siddaramappa S."/>
            <person name="Challacombe J.F."/>
            <person name="Lowry S.R."/>
            <person name="Clum A."/>
            <person name="Lapidus A.L."/>
            <person name="Burkhart K.B."/>
            <person name="Harkins V."/>
            <person name="Vieille C."/>
        </authorList>
    </citation>
    <scope>NUCLEOTIDE SEQUENCE [LARGE SCALE GENOMIC DNA]</scope>
    <source>
        <strain>ATCC 55618 / DSM 22257 / CCUG 43843 / 130Z</strain>
    </source>
</reference>
<proteinExistence type="inferred from homology"/>
<comment type="function">
    <text evidence="1">Involved in peptide bond synthesis. Alleviates ribosome stalling that occurs when 3 or more consecutive Pro residues or the sequence PPG is present in a protein, possibly by augmenting the peptidyl transferase activity of the ribosome. Modification of Lys-34 is required for alleviation.</text>
</comment>
<comment type="pathway">
    <text evidence="1">Protein biosynthesis; polypeptide chain elongation.</text>
</comment>
<comment type="subcellular location">
    <subcellularLocation>
        <location evidence="1">Cytoplasm</location>
    </subcellularLocation>
</comment>
<comment type="PTM">
    <text evidence="1">May be beta-lysylated on the epsilon-amino group of Lys-34 by the combined action of EpmA and EpmB, and then hydroxylated on the C5 position of the same residue by EpmC (if this protein is present). Lysylation is critical for the stimulatory effect of EF-P on peptide-bond formation. The lysylation moiety may extend toward the peptidyltransferase center and stabilize the terminal 3-CCA end of the tRNA. Hydroxylation of the C5 position on Lys-34 may allow additional potential stabilizing hydrogen-bond interactions with the P-tRNA.</text>
</comment>
<comment type="similarity">
    <text evidence="1">Belongs to the elongation factor P family.</text>
</comment>
<evidence type="ECO:0000255" key="1">
    <source>
        <dbReference type="HAMAP-Rule" id="MF_00141"/>
    </source>
</evidence>
<accession>A6VR54</accession>
<organism>
    <name type="scientific">Actinobacillus succinogenes (strain ATCC 55618 / DSM 22257 / CCUG 43843 / 130Z)</name>
    <dbReference type="NCBI Taxonomy" id="339671"/>
    <lineage>
        <taxon>Bacteria</taxon>
        <taxon>Pseudomonadati</taxon>
        <taxon>Pseudomonadota</taxon>
        <taxon>Gammaproteobacteria</taxon>
        <taxon>Pasteurellales</taxon>
        <taxon>Pasteurellaceae</taxon>
        <taxon>Actinobacillus</taxon>
    </lineage>
</organism>
<sequence>MASYTTTDFKPGLKFMQDGEPCVIIENEFVKPGKGQAFTRTRIRKLISGKVLDVNFKSGTSVEAADVMDLNLNYSYKDEAFWYFMHPETFEQYSADAKAVGEAEKWLLDQAECIVTLWNGSPISVTPPNFVELEVVDTDPGLKGDTAGTGGKPATLSTGAVVRVPLFIQIGEVIKVDTRSGEYVSRVK</sequence>
<keyword id="KW-0963">Cytoplasm</keyword>
<keyword id="KW-0251">Elongation factor</keyword>
<keyword id="KW-0379">Hydroxylation</keyword>
<keyword id="KW-0648">Protein biosynthesis</keyword>
<keyword id="KW-1185">Reference proteome</keyword>
<feature type="chain" id="PRO_1000071454" description="Elongation factor P">
    <location>
        <begin position="1"/>
        <end position="188"/>
    </location>
</feature>
<feature type="modified residue" description="N6-(3,6-diaminohexanoyl)-5-hydroxylysine" evidence="1">
    <location>
        <position position="34"/>
    </location>
</feature>
<name>EFP_ACTSZ</name>
<gene>
    <name evidence="1" type="primary">efp</name>
    <name type="ordered locus">Asuc_2107</name>
</gene>
<protein>
    <recommendedName>
        <fullName evidence="1">Elongation factor P</fullName>
        <shortName evidence="1">EF-P</shortName>
    </recommendedName>
</protein>